<name>CYB_DROSU</name>
<accession>P51941</accession>
<geneLocation type="mitochondrion"/>
<keyword id="KW-0249">Electron transport</keyword>
<keyword id="KW-0349">Heme</keyword>
<keyword id="KW-0408">Iron</keyword>
<keyword id="KW-0472">Membrane</keyword>
<keyword id="KW-0479">Metal-binding</keyword>
<keyword id="KW-0496">Mitochondrion</keyword>
<keyword id="KW-0999">Mitochondrion inner membrane</keyword>
<keyword id="KW-0679">Respiratory chain</keyword>
<keyword id="KW-0812">Transmembrane</keyword>
<keyword id="KW-1133">Transmembrane helix</keyword>
<keyword id="KW-0813">Transport</keyword>
<keyword id="KW-0830">Ubiquinone</keyword>
<proteinExistence type="inferred from homology"/>
<dbReference type="EMBL" id="U07287">
    <property type="protein sequence ID" value="AAA76624.1"/>
    <property type="molecule type" value="Genomic_DNA"/>
</dbReference>
<dbReference type="EMBL" id="X65130">
    <property type="protein sequence ID" value="CAA46259.1"/>
    <property type="molecule type" value="Genomic_DNA"/>
</dbReference>
<dbReference type="SMR" id="P51941"/>
<dbReference type="EnsemblMetazoa" id="GeneID_43561566_t1">
    <property type="protein sequence ID" value="YP_009725129.1"/>
    <property type="gene ID" value="GeneID_43561566"/>
</dbReference>
<dbReference type="GO" id="GO:0005743">
    <property type="term" value="C:mitochondrial inner membrane"/>
    <property type="evidence" value="ECO:0007669"/>
    <property type="project" value="UniProtKB-SubCell"/>
</dbReference>
<dbReference type="GO" id="GO:0046872">
    <property type="term" value="F:metal ion binding"/>
    <property type="evidence" value="ECO:0007669"/>
    <property type="project" value="UniProtKB-KW"/>
</dbReference>
<dbReference type="GO" id="GO:0008121">
    <property type="term" value="F:ubiquinol-cytochrome-c reductase activity"/>
    <property type="evidence" value="ECO:0007669"/>
    <property type="project" value="TreeGrafter"/>
</dbReference>
<dbReference type="GO" id="GO:0006122">
    <property type="term" value="P:mitochondrial electron transport, ubiquinol to cytochrome c"/>
    <property type="evidence" value="ECO:0007669"/>
    <property type="project" value="TreeGrafter"/>
</dbReference>
<dbReference type="CDD" id="cd00290">
    <property type="entry name" value="cytochrome_b_C"/>
    <property type="match status" value="1"/>
</dbReference>
<dbReference type="Gene3D" id="1.20.810.10">
    <property type="entry name" value="Cytochrome Bc1 Complex, Chain C"/>
    <property type="match status" value="1"/>
</dbReference>
<dbReference type="InterPro" id="IPR005798">
    <property type="entry name" value="Cyt_b/b6_C"/>
</dbReference>
<dbReference type="InterPro" id="IPR036150">
    <property type="entry name" value="Cyt_b/b6_C_sf"/>
</dbReference>
<dbReference type="InterPro" id="IPR027387">
    <property type="entry name" value="Cytb/b6-like_sf"/>
</dbReference>
<dbReference type="InterPro" id="IPR048260">
    <property type="entry name" value="Cytochrome_b_C_euk/bac"/>
</dbReference>
<dbReference type="PANTHER" id="PTHR19271">
    <property type="entry name" value="CYTOCHROME B"/>
    <property type="match status" value="1"/>
</dbReference>
<dbReference type="PANTHER" id="PTHR19271:SF16">
    <property type="entry name" value="CYTOCHROME B"/>
    <property type="match status" value="1"/>
</dbReference>
<dbReference type="Pfam" id="PF00032">
    <property type="entry name" value="Cytochrom_B_C"/>
    <property type="match status" value="1"/>
</dbReference>
<dbReference type="SUPFAM" id="SSF81648">
    <property type="entry name" value="a domain/subunit of cytochrome bc1 complex (Ubiquinol-cytochrome c reductase)"/>
    <property type="match status" value="1"/>
</dbReference>
<dbReference type="PROSITE" id="PS51003">
    <property type="entry name" value="CYTB_CTER"/>
    <property type="match status" value="1"/>
</dbReference>
<gene>
    <name type="primary">mt:Cyt-b</name>
    <name type="synonym">Cob</name>
    <name type="synonym">cytb</name>
</gene>
<comment type="function">
    <text evidence="2">Component of the ubiquinol-cytochrome c reductase complex (complex III or cytochrome b-c1 complex) that is part of the mitochondrial respiratory chain. The b-c1 complex mediates electron transfer from ubiquinol to cytochrome c. Contributes to the generation of a proton gradient across the mitochondrial membrane that is then used for ATP synthesis.</text>
</comment>
<comment type="cofactor">
    <cofactor evidence="2">
        <name>heme</name>
        <dbReference type="ChEBI" id="CHEBI:30413"/>
    </cofactor>
    <text evidence="2">Binds 2 heme groups non-covalently.</text>
</comment>
<comment type="subunit">
    <text evidence="2">The main subunits of complex b-c1 are: cytochrome b, cytochrome c1 and the Rieske protein.</text>
</comment>
<comment type="subcellular location">
    <subcellularLocation>
        <location evidence="3">Mitochondrion inner membrane</location>
        <topology evidence="3">Multi-pass membrane protein</topology>
    </subcellularLocation>
</comment>
<comment type="miscellaneous">
    <text evidence="1">Heme 1 (or BL or b562) is low-potential and absorbs at about 562 nm, and heme 2 (or BH or b566) is high-potential and absorbs at about 566 nm.</text>
</comment>
<comment type="similarity">
    <text evidence="4">Belongs to the cytochrome b family.</text>
</comment>
<comment type="caution">
    <text evidence="2">The full-length protein contains only eight transmembrane helices, not nine as predicted by bioinformatics tools.</text>
</comment>
<feature type="chain" id="PRO_0000060897" description="Cytochrome b">
    <location>
        <begin position="1" status="less than"/>
        <end position="166"/>
    </location>
</feature>
<feature type="transmembrane region" description="Helical" evidence="2">
    <location>
        <begin position="15"/>
        <end position="35"/>
    </location>
</feature>
<feature type="transmembrane region" description="Helical" evidence="4">
    <location>
        <begin position="77"/>
        <end position="97"/>
    </location>
</feature>
<feature type="transmembrane region" description="Helical" evidence="4">
    <location>
        <begin position="109"/>
        <end position="129"/>
    </location>
</feature>
<feature type="transmembrane region" description="Helical" evidence="2">
    <location>
        <begin position="136"/>
        <end position="156"/>
    </location>
</feature>
<feature type="non-terminal residue">
    <location>
        <position position="1"/>
    </location>
</feature>
<protein>
    <recommendedName>
        <fullName>Cytochrome b</fullName>
    </recommendedName>
    <alternativeName>
        <fullName>Complex III subunit 3</fullName>
    </alternativeName>
    <alternativeName>
        <fullName>Complex III subunit III</fullName>
    </alternativeName>
    <alternativeName>
        <fullName>Cytochrome b-c1 complex subunit 3</fullName>
    </alternativeName>
    <alternativeName>
        <fullName>Ubiquinol-cytochrome-c reductase complex cytochrome b subunit</fullName>
    </alternativeName>
</protein>
<reference key="1">
    <citation type="journal article" date="1994" name="J. Mol. Evol.">
        <title>Phylogeny of the Drosophila obscura species group deduced from mitochondrial DNA sequences.</title>
        <authorList>
            <person name="Barrio E."/>
            <person name="Latorre A."/>
            <person name="Moya A."/>
        </authorList>
    </citation>
    <scope>NUCLEOTIDE SEQUENCE [GENOMIC DNA]</scope>
</reference>
<reference key="2">
    <citation type="journal article" date="1992" name="Proc. Natl. Acad. Sci. U.S.A.">
        <title>Stable heteroplasmy for a large-scale deletion in the coding region of Drosophila subobscura mitochondrial DNA.</title>
        <authorList>
            <person name="Volz-Lingenhohl A."/>
            <person name="Solignac M."/>
            <person name="Sperlich D."/>
        </authorList>
    </citation>
    <scope>NUCLEOTIDE SEQUENCE [GENOMIC DNA] OF 105-166</scope>
    <source>
        <strain>Ssp. TUE 3</strain>
    </source>
</reference>
<evidence type="ECO:0000250" key="1"/>
<evidence type="ECO:0000250" key="2">
    <source>
        <dbReference type="UniProtKB" id="P00157"/>
    </source>
</evidence>
<evidence type="ECO:0000250" key="3">
    <source>
        <dbReference type="UniProtKB" id="P00163"/>
    </source>
</evidence>
<evidence type="ECO:0000255" key="4">
    <source>
        <dbReference type="PROSITE-ProRule" id="PRU00967"/>
    </source>
</evidence>
<sequence length="166" mass="19198">NSNIDKIPFHPYFTFKDIVGFIVMIFLLISLVLINPNLLGDPDNFIPANPLVTPAHIQPEWYFLFAYAILRSIPNKLGGVIALVLSIAILMILPFYNLSKFRGIQFYPINQILFWIMLVTVILLTWIGARPVEEPYVLLGQILTVIYFLYYLINPLVSKWWDNLLN</sequence>
<organism>
    <name type="scientific">Drosophila subobscura</name>
    <name type="common">Fruit fly</name>
    <dbReference type="NCBI Taxonomy" id="7241"/>
    <lineage>
        <taxon>Eukaryota</taxon>
        <taxon>Metazoa</taxon>
        <taxon>Ecdysozoa</taxon>
        <taxon>Arthropoda</taxon>
        <taxon>Hexapoda</taxon>
        <taxon>Insecta</taxon>
        <taxon>Pterygota</taxon>
        <taxon>Neoptera</taxon>
        <taxon>Endopterygota</taxon>
        <taxon>Diptera</taxon>
        <taxon>Brachycera</taxon>
        <taxon>Muscomorpha</taxon>
        <taxon>Ephydroidea</taxon>
        <taxon>Drosophilidae</taxon>
        <taxon>Drosophila</taxon>
        <taxon>Sophophora</taxon>
    </lineage>
</organism>